<sequence>MTNKIKIGHVHMSGCTGCLVSLADNNLGLIKILDDYADLVYCLTLADVRHIPEMDVALVEGSVCLQDHESVEDIKETRKKSKIVVALGSCACYGNITRFSRGGQHNQPQHESYLPIGDLIDVDVYIPGCPPSPELIRNVAVMAYLLLEGNEEQKELAGKYLKPLMDLAKRGTSGCFCDLMYDVINQGLCMGCGTCAASCPVHAITLEFGKPQGERDLCIKCGSCYGACPRSFFNLDVIPEFENINEIIANALKEGESDD</sequence>
<reference key="1">
    <citation type="journal article" date="1998" name="Arch. Microbiol.">
        <title>Two F420-reducing hydrogenases in Methanosarcina barkeri.</title>
        <authorList>
            <person name="Vaupel M."/>
            <person name="Thauer R.K."/>
        </authorList>
    </citation>
    <scope>NUCLEOTIDE SEQUENCE [GENOMIC DNA]</scope>
</reference>
<reference key="2">
    <citation type="journal article" date="2006" name="J. Bacteriol.">
        <title>The Methanosarcina barkeri genome: comparative analysis with Methanosarcina acetivorans and Methanosarcina mazei reveals extensive rearrangement within methanosarcinal genomes.</title>
        <authorList>
            <person name="Maeder D.L."/>
            <person name="Anderson I."/>
            <person name="Brettin T.S."/>
            <person name="Bruce D.C."/>
            <person name="Gilna P."/>
            <person name="Han C.S."/>
            <person name="Lapidus A."/>
            <person name="Metcalf W.W."/>
            <person name="Saunders E."/>
            <person name="Tapia R."/>
            <person name="Sowers K.R."/>
        </authorList>
    </citation>
    <scope>NUCLEOTIDE SEQUENCE [LARGE SCALE GENOMIC DNA]</scope>
    <source>
        <strain>Fusaro / DSM 804</strain>
    </source>
</reference>
<reference key="3">
    <citation type="journal article" date="1995" name="Eur. J. Biochem.">
        <title>Biochemical characterization of the 8-hydroxy-5-deazaflavin-reactive hydrogenase from Methanosarcina barkeri Fusaro.</title>
        <authorList>
            <person name="Michel R."/>
            <person name="Massanz C."/>
            <person name="Kostka S."/>
            <person name="Richter M."/>
            <person name="Fiebig K."/>
        </authorList>
    </citation>
    <scope>PROTEIN SEQUENCE OF 2-20</scope>
</reference>
<keyword id="KW-0004">4Fe-4S</keyword>
<keyword id="KW-0903">Direct protein sequencing</keyword>
<keyword id="KW-0249">Electron transport</keyword>
<keyword id="KW-0408">Iron</keyword>
<keyword id="KW-0411">Iron-sulfur</keyword>
<keyword id="KW-0479">Metal-binding</keyword>
<keyword id="KW-0560">Oxidoreductase</keyword>
<keyword id="KW-0677">Repeat</keyword>
<keyword id="KW-0813">Transport</keyword>
<name>FRHG_METBF</name>
<comment type="function">
    <text>Reduces the physiological low-potential two-electron acceptor coenzyme F420, and the artificial one-electron acceptor methylviologen.</text>
</comment>
<comment type="catalytic activity">
    <reaction>
        <text>oxidized coenzyme F420-(gamma-L-Glu)(n) + H2 + H(+) = reduced coenzyme F420-(gamma-L-Glu)(n)</text>
        <dbReference type="Rhea" id="RHEA:23760"/>
        <dbReference type="Rhea" id="RHEA-COMP:12939"/>
        <dbReference type="Rhea" id="RHEA-COMP:14378"/>
        <dbReference type="ChEBI" id="CHEBI:15378"/>
        <dbReference type="ChEBI" id="CHEBI:18276"/>
        <dbReference type="ChEBI" id="CHEBI:133980"/>
        <dbReference type="ChEBI" id="CHEBI:139511"/>
        <dbReference type="EC" id="1.12.98.1"/>
    </reaction>
</comment>
<comment type="cofactor">
    <cofactor>
        <name>Ni(2+)</name>
        <dbReference type="ChEBI" id="CHEBI:49786"/>
    </cofactor>
</comment>
<comment type="cofactor">
    <cofactor>
        <name>iron-sulfur cluster</name>
        <dbReference type="ChEBI" id="CHEBI:30408"/>
    </cofactor>
</comment>
<comment type="cofactor">
    <cofactor>
        <name>FAD</name>
        <dbReference type="ChEBI" id="CHEBI:57692"/>
    </cofactor>
</comment>
<comment type="subunit">
    <text>Pentamer of two alpha chains, two beta chains and a gamma chain.</text>
</comment>
<comment type="similarity">
    <text evidence="4">Belongs to the FrhG family.</text>
</comment>
<comment type="sequence caution" evidence="4">
    <conflict type="erroneous initiation">
        <sequence resource="EMBL-CDS" id="AAZ69432"/>
    </conflict>
</comment>
<protein>
    <recommendedName>
        <fullName>Coenzyme F420 hydrogenase subunit gamma</fullName>
        <ecNumber>1.12.98.1</ecNumber>
    </recommendedName>
    <alternativeName>
        <fullName>8-hydroxy-5-deazaflavin-reducing hydrogenase subunit gamma</fullName>
        <shortName>FRH</shortName>
    </alternativeName>
</protein>
<organism>
    <name type="scientific">Methanosarcina barkeri (strain Fusaro / DSM 804)</name>
    <dbReference type="NCBI Taxonomy" id="269797"/>
    <lineage>
        <taxon>Archaea</taxon>
        <taxon>Methanobacteriati</taxon>
        <taxon>Methanobacteriota</taxon>
        <taxon>Stenosarchaea group</taxon>
        <taxon>Methanomicrobia</taxon>
        <taxon>Methanosarcinales</taxon>
        <taxon>Methanosarcinaceae</taxon>
        <taxon>Methanosarcina</taxon>
    </lineage>
</organism>
<evidence type="ECO:0000250" key="1"/>
<evidence type="ECO:0000255" key="2">
    <source>
        <dbReference type="PROSITE-ProRule" id="PRU00711"/>
    </source>
</evidence>
<evidence type="ECO:0000269" key="3">
    <source>
    </source>
</evidence>
<evidence type="ECO:0000305" key="4"/>
<gene>
    <name type="primary">frhG</name>
    <name type="ordered locus">Mbar_A0450</name>
</gene>
<dbReference type="EC" id="1.12.98.1"/>
<dbReference type="EMBL" id="Y13763">
    <property type="protein sequence ID" value="CAA74092.1"/>
    <property type="molecule type" value="Genomic_DNA"/>
</dbReference>
<dbReference type="EMBL" id="CP000099">
    <property type="protein sequence ID" value="AAZ69432.1"/>
    <property type="status" value="ALT_INIT"/>
    <property type="molecule type" value="Genomic_DNA"/>
</dbReference>
<dbReference type="PIR" id="S63485">
    <property type="entry name" value="S63485"/>
</dbReference>
<dbReference type="SMR" id="P80491"/>
<dbReference type="STRING" id="269797.Mbar_A0450"/>
<dbReference type="PaxDb" id="269797-Mbar_A0450"/>
<dbReference type="KEGG" id="mba:Mbar_A0450"/>
<dbReference type="eggNOG" id="arCOG02473">
    <property type="taxonomic scope" value="Archaea"/>
</dbReference>
<dbReference type="HOGENOM" id="CLU_075477_0_0_2"/>
<dbReference type="BioCyc" id="MetaCyc:MONOMER-12649"/>
<dbReference type="BRENDA" id="1.12.98.1">
    <property type="organism ID" value="3250"/>
</dbReference>
<dbReference type="GO" id="GO:0051539">
    <property type="term" value="F:4 iron, 4 sulfur cluster binding"/>
    <property type="evidence" value="ECO:0007669"/>
    <property type="project" value="UniProtKB-KW"/>
</dbReference>
<dbReference type="GO" id="GO:0050454">
    <property type="term" value="F:coenzyme F420 hydrogenase activity"/>
    <property type="evidence" value="ECO:0007669"/>
    <property type="project" value="UniProtKB-EC"/>
</dbReference>
<dbReference type="GO" id="GO:0050660">
    <property type="term" value="F:flavin adenine dinucleotide binding"/>
    <property type="evidence" value="ECO:0007669"/>
    <property type="project" value="InterPro"/>
</dbReference>
<dbReference type="GO" id="GO:0016151">
    <property type="term" value="F:nickel cation binding"/>
    <property type="evidence" value="ECO:0007669"/>
    <property type="project" value="InterPro"/>
</dbReference>
<dbReference type="Gene3D" id="3.30.70.20">
    <property type="match status" value="1"/>
</dbReference>
<dbReference type="Gene3D" id="3.40.50.700">
    <property type="entry name" value="NADH:ubiquinone oxidoreductase-like, 20kDa subunit"/>
    <property type="match status" value="1"/>
</dbReference>
<dbReference type="InterPro" id="IPR017896">
    <property type="entry name" value="4Fe4S_Fe-S-bd"/>
</dbReference>
<dbReference type="InterPro" id="IPR017900">
    <property type="entry name" value="4Fe4S_Fe_S_CS"/>
</dbReference>
<dbReference type="InterPro" id="IPR017681">
    <property type="entry name" value="Coenz_F420_hydrogenase_gsu"/>
</dbReference>
<dbReference type="InterPro" id="IPR051349">
    <property type="entry name" value="Hydrogenase_assoc-protein"/>
</dbReference>
<dbReference type="InterPro" id="IPR006137">
    <property type="entry name" value="NADH_UbQ_OxRdtase-like_20kDa"/>
</dbReference>
<dbReference type="InterPro" id="IPR037024">
    <property type="entry name" value="NiFe_Hase_small_N_sf"/>
</dbReference>
<dbReference type="NCBIfam" id="TIGR03294">
    <property type="entry name" value="FrhG"/>
    <property type="match status" value="1"/>
</dbReference>
<dbReference type="PANTHER" id="PTHR42845">
    <property type="entry name" value="COENZYME F420-REDUCING HYDROGENASE, GAMMA SUBUNIT"/>
    <property type="match status" value="1"/>
</dbReference>
<dbReference type="PANTHER" id="PTHR42845:SF2">
    <property type="entry name" value="F420-NON-REDUCING HYDROGENASE VHU SUBUNIT G"/>
    <property type="match status" value="1"/>
</dbReference>
<dbReference type="Pfam" id="PF13187">
    <property type="entry name" value="Fer4_9"/>
    <property type="match status" value="1"/>
</dbReference>
<dbReference type="Pfam" id="PF01058">
    <property type="entry name" value="Oxidored_q6"/>
    <property type="match status" value="1"/>
</dbReference>
<dbReference type="SUPFAM" id="SSF56770">
    <property type="entry name" value="HydA/Nqo6-like"/>
    <property type="match status" value="1"/>
</dbReference>
<dbReference type="PROSITE" id="PS00198">
    <property type="entry name" value="4FE4S_FER_1"/>
    <property type="match status" value="2"/>
</dbReference>
<dbReference type="PROSITE" id="PS51379">
    <property type="entry name" value="4FE4S_FER_2"/>
    <property type="match status" value="2"/>
</dbReference>
<proteinExistence type="evidence at protein level"/>
<feature type="initiator methionine" description="Removed" evidence="3">
    <location>
        <position position="1"/>
    </location>
</feature>
<feature type="chain" id="PRO_0000159231" description="Coenzyme F420 hydrogenase subunit gamma">
    <location>
        <begin position="2"/>
        <end position="259"/>
    </location>
</feature>
<feature type="domain" description="4Fe-4S ferredoxin-type 1" evidence="2">
    <location>
        <begin position="180"/>
        <end position="208"/>
    </location>
</feature>
<feature type="domain" description="4Fe-4S ferredoxin-type 2" evidence="2">
    <location>
        <begin position="209"/>
        <end position="238"/>
    </location>
</feature>
<feature type="binding site" evidence="1">
    <location>
        <position position="189"/>
    </location>
    <ligand>
        <name>[4Fe-4S] cluster</name>
        <dbReference type="ChEBI" id="CHEBI:49883"/>
        <label>1</label>
    </ligand>
</feature>
<feature type="binding site" evidence="1">
    <location>
        <position position="192"/>
    </location>
    <ligand>
        <name>[4Fe-4S] cluster</name>
        <dbReference type="ChEBI" id="CHEBI:49883"/>
        <label>1</label>
    </ligand>
</feature>
<feature type="binding site" evidence="1">
    <location>
        <position position="195"/>
    </location>
    <ligand>
        <name>[4Fe-4S] cluster</name>
        <dbReference type="ChEBI" id="CHEBI:49883"/>
        <label>1</label>
    </ligand>
</feature>
<feature type="binding site" evidence="1">
    <location>
        <position position="199"/>
    </location>
    <ligand>
        <name>[4Fe-4S] cluster</name>
        <dbReference type="ChEBI" id="CHEBI:49883"/>
        <label>2</label>
    </ligand>
</feature>
<feature type="binding site" evidence="1">
    <location>
        <position position="218"/>
    </location>
    <ligand>
        <name>[4Fe-4S] cluster</name>
        <dbReference type="ChEBI" id="CHEBI:49883"/>
        <label>2</label>
    </ligand>
</feature>
<feature type="binding site" evidence="1">
    <location>
        <position position="221"/>
    </location>
    <ligand>
        <name>[4Fe-4S] cluster</name>
        <dbReference type="ChEBI" id="CHEBI:49883"/>
        <label>2</label>
    </ligand>
</feature>
<feature type="binding site" evidence="1">
    <location>
        <position position="224"/>
    </location>
    <ligand>
        <name>[4Fe-4S] cluster</name>
        <dbReference type="ChEBI" id="CHEBI:49883"/>
        <label>2</label>
    </ligand>
</feature>
<feature type="binding site" evidence="1">
    <location>
        <position position="228"/>
    </location>
    <ligand>
        <name>[4Fe-4S] cluster</name>
        <dbReference type="ChEBI" id="CHEBI:49883"/>
        <label>1</label>
    </ligand>
</feature>
<accession>P80491</accession>
<accession>O33167</accession>
<accession>Q46FB0</accession>